<name>RPIA_LEVBA</name>
<feature type="chain" id="PRO_1000016937" description="Ribose-5-phosphate isomerase A">
    <location>
        <begin position="1"/>
        <end position="228"/>
    </location>
</feature>
<feature type="active site" description="Proton acceptor" evidence="1">
    <location>
        <position position="106"/>
    </location>
</feature>
<feature type="binding site" evidence="1">
    <location>
        <begin position="28"/>
        <end position="31"/>
    </location>
    <ligand>
        <name>substrate</name>
    </ligand>
</feature>
<feature type="binding site" evidence="1">
    <location>
        <begin position="84"/>
        <end position="87"/>
    </location>
    <ligand>
        <name>substrate</name>
    </ligand>
</feature>
<feature type="binding site" evidence="1">
    <location>
        <begin position="97"/>
        <end position="100"/>
    </location>
    <ligand>
        <name>substrate</name>
    </ligand>
</feature>
<feature type="binding site" evidence="1">
    <location>
        <position position="124"/>
    </location>
    <ligand>
        <name>substrate</name>
    </ligand>
</feature>
<sequence>MDQNALKALVGQEAVKYVEDGMILGIGTGSTVRYMIDALGERVKNEGLHIIGVATSDRSAKQAESLGITIKELDEVDHLDLTIDGADEIDDNFQGIKGGGAAHLWEKIVAINSTKNMWIVDESKMVHHLGAFPLPLEVIPFGSSHVLEKLNKMGFNPSFRMTDTGEHVLTDSKNYIIDLHLGRIDHPHDLANTLNGIVGVVEHGLFLDTVNTVIVGRQDGPEVLNARD</sequence>
<proteinExistence type="inferred from homology"/>
<comment type="function">
    <text evidence="1">Catalyzes the reversible conversion of ribose-5-phosphate to ribulose 5-phosphate.</text>
</comment>
<comment type="catalytic activity">
    <reaction evidence="1">
        <text>aldehydo-D-ribose 5-phosphate = D-ribulose 5-phosphate</text>
        <dbReference type="Rhea" id="RHEA:14657"/>
        <dbReference type="ChEBI" id="CHEBI:58121"/>
        <dbReference type="ChEBI" id="CHEBI:58273"/>
        <dbReference type="EC" id="5.3.1.6"/>
    </reaction>
</comment>
<comment type="pathway">
    <text evidence="1">Carbohydrate degradation; pentose phosphate pathway; D-ribose 5-phosphate from D-ribulose 5-phosphate (non-oxidative stage): step 1/1.</text>
</comment>
<comment type="subunit">
    <text evidence="1">Homodimer.</text>
</comment>
<comment type="similarity">
    <text evidence="1">Belongs to the ribose 5-phosphate isomerase family.</text>
</comment>
<accession>Q03SV2</accession>
<reference key="1">
    <citation type="journal article" date="2006" name="Proc. Natl. Acad. Sci. U.S.A.">
        <title>Comparative genomics of the lactic acid bacteria.</title>
        <authorList>
            <person name="Makarova K.S."/>
            <person name="Slesarev A."/>
            <person name="Wolf Y.I."/>
            <person name="Sorokin A."/>
            <person name="Mirkin B."/>
            <person name="Koonin E.V."/>
            <person name="Pavlov A."/>
            <person name="Pavlova N."/>
            <person name="Karamychev V."/>
            <person name="Polouchine N."/>
            <person name="Shakhova V."/>
            <person name="Grigoriev I."/>
            <person name="Lou Y."/>
            <person name="Rohksar D."/>
            <person name="Lucas S."/>
            <person name="Huang K."/>
            <person name="Goodstein D.M."/>
            <person name="Hawkins T."/>
            <person name="Plengvidhya V."/>
            <person name="Welker D."/>
            <person name="Hughes J."/>
            <person name="Goh Y."/>
            <person name="Benson A."/>
            <person name="Baldwin K."/>
            <person name="Lee J.-H."/>
            <person name="Diaz-Muniz I."/>
            <person name="Dosti B."/>
            <person name="Smeianov V."/>
            <person name="Wechter W."/>
            <person name="Barabote R."/>
            <person name="Lorca G."/>
            <person name="Altermann E."/>
            <person name="Barrangou R."/>
            <person name="Ganesan B."/>
            <person name="Xie Y."/>
            <person name="Rawsthorne H."/>
            <person name="Tamir D."/>
            <person name="Parker C."/>
            <person name="Breidt F."/>
            <person name="Broadbent J.R."/>
            <person name="Hutkins R."/>
            <person name="O'Sullivan D."/>
            <person name="Steele J."/>
            <person name="Unlu G."/>
            <person name="Saier M.H. Jr."/>
            <person name="Klaenhammer T."/>
            <person name="Richardson P."/>
            <person name="Kozyavkin S."/>
            <person name="Weimer B.C."/>
            <person name="Mills D.A."/>
        </authorList>
    </citation>
    <scope>NUCLEOTIDE SEQUENCE [LARGE SCALE GENOMIC DNA]</scope>
    <source>
        <strain>ATCC 367 / BCRC 12310 / CIP 105137 / JCM 1170 / LMG 11437 / NCIMB 947 / NCTC 947</strain>
    </source>
</reference>
<dbReference type="EC" id="5.3.1.6" evidence="1"/>
<dbReference type="EMBL" id="CP000416">
    <property type="protein sequence ID" value="ABJ63720.1"/>
    <property type="molecule type" value="Genomic_DNA"/>
</dbReference>
<dbReference type="RefSeq" id="WP_011667345.1">
    <property type="nucleotide sequence ID" value="NC_008497.1"/>
</dbReference>
<dbReference type="SMR" id="Q03SV2"/>
<dbReference type="STRING" id="387344.LVIS_0574"/>
<dbReference type="GeneID" id="56992391"/>
<dbReference type="KEGG" id="lbr:LVIS_0574"/>
<dbReference type="eggNOG" id="COG0120">
    <property type="taxonomic scope" value="Bacteria"/>
</dbReference>
<dbReference type="HOGENOM" id="CLU_056590_1_0_9"/>
<dbReference type="UniPathway" id="UPA00115">
    <property type="reaction ID" value="UER00412"/>
</dbReference>
<dbReference type="Proteomes" id="UP000001652">
    <property type="component" value="Chromosome"/>
</dbReference>
<dbReference type="GO" id="GO:0005829">
    <property type="term" value="C:cytosol"/>
    <property type="evidence" value="ECO:0007669"/>
    <property type="project" value="TreeGrafter"/>
</dbReference>
<dbReference type="GO" id="GO:0004751">
    <property type="term" value="F:ribose-5-phosphate isomerase activity"/>
    <property type="evidence" value="ECO:0007669"/>
    <property type="project" value="UniProtKB-UniRule"/>
</dbReference>
<dbReference type="GO" id="GO:0006014">
    <property type="term" value="P:D-ribose metabolic process"/>
    <property type="evidence" value="ECO:0007669"/>
    <property type="project" value="TreeGrafter"/>
</dbReference>
<dbReference type="GO" id="GO:0009052">
    <property type="term" value="P:pentose-phosphate shunt, non-oxidative branch"/>
    <property type="evidence" value="ECO:0007669"/>
    <property type="project" value="UniProtKB-UniRule"/>
</dbReference>
<dbReference type="CDD" id="cd01398">
    <property type="entry name" value="RPI_A"/>
    <property type="match status" value="1"/>
</dbReference>
<dbReference type="FunFam" id="3.40.50.1360:FF:000001">
    <property type="entry name" value="Ribose-5-phosphate isomerase A"/>
    <property type="match status" value="1"/>
</dbReference>
<dbReference type="Gene3D" id="3.30.70.260">
    <property type="match status" value="1"/>
</dbReference>
<dbReference type="Gene3D" id="3.40.50.1360">
    <property type="match status" value="1"/>
</dbReference>
<dbReference type="HAMAP" id="MF_00170">
    <property type="entry name" value="Rib_5P_isom_A"/>
    <property type="match status" value="1"/>
</dbReference>
<dbReference type="InterPro" id="IPR037171">
    <property type="entry name" value="NagB/RpiA_transferase-like"/>
</dbReference>
<dbReference type="InterPro" id="IPR020672">
    <property type="entry name" value="Ribose5P_isomerase_typA_subgr"/>
</dbReference>
<dbReference type="InterPro" id="IPR004788">
    <property type="entry name" value="Ribose5P_isomerase_type_A"/>
</dbReference>
<dbReference type="NCBIfam" id="NF001924">
    <property type="entry name" value="PRK00702.1"/>
    <property type="match status" value="1"/>
</dbReference>
<dbReference type="NCBIfam" id="TIGR00021">
    <property type="entry name" value="rpiA"/>
    <property type="match status" value="1"/>
</dbReference>
<dbReference type="PANTHER" id="PTHR11934">
    <property type="entry name" value="RIBOSE-5-PHOSPHATE ISOMERASE"/>
    <property type="match status" value="1"/>
</dbReference>
<dbReference type="PANTHER" id="PTHR11934:SF0">
    <property type="entry name" value="RIBOSE-5-PHOSPHATE ISOMERASE"/>
    <property type="match status" value="1"/>
</dbReference>
<dbReference type="Pfam" id="PF06026">
    <property type="entry name" value="Rib_5-P_isom_A"/>
    <property type="match status" value="1"/>
</dbReference>
<dbReference type="SUPFAM" id="SSF75445">
    <property type="entry name" value="D-ribose-5-phosphate isomerase (RpiA), lid domain"/>
    <property type="match status" value="1"/>
</dbReference>
<dbReference type="SUPFAM" id="SSF100950">
    <property type="entry name" value="NagB/RpiA/CoA transferase-like"/>
    <property type="match status" value="1"/>
</dbReference>
<organism>
    <name type="scientific">Levilactobacillus brevis (strain ATCC 367 / BCRC 12310 / CIP 105137 / JCM 1170 / LMG 11437 / NCIMB 947 / NCTC 947)</name>
    <name type="common">Lactobacillus brevis</name>
    <dbReference type="NCBI Taxonomy" id="387344"/>
    <lineage>
        <taxon>Bacteria</taxon>
        <taxon>Bacillati</taxon>
        <taxon>Bacillota</taxon>
        <taxon>Bacilli</taxon>
        <taxon>Lactobacillales</taxon>
        <taxon>Lactobacillaceae</taxon>
        <taxon>Levilactobacillus</taxon>
    </lineage>
</organism>
<gene>
    <name evidence="1" type="primary">rpiA</name>
    <name type="ordered locus">LVIS_0574</name>
</gene>
<keyword id="KW-0413">Isomerase</keyword>
<keyword id="KW-1185">Reference proteome</keyword>
<protein>
    <recommendedName>
        <fullName evidence="1">Ribose-5-phosphate isomerase A</fullName>
        <ecNumber evidence="1">5.3.1.6</ecNumber>
    </recommendedName>
    <alternativeName>
        <fullName evidence="1">Phosphoriboisomerase A</fullName>
        <shortName evidence="1">PRI</shortName>
    </alternativeName>
</protein>
<evidence type="ECO:0000255" key="1">
    <source>
        <dbReference type="HAMAP-Rule" id="MF_00170"/>
    </source>
</evidence>